<accession>P31972</accession>
<accession>B1XMA2</accession>
<gene>
    <name type="ordered locus">SYNPCC7002_A1392</name>
</gene>
<dbReference type="EMBL" id="M99379">
    <property type="protein sequence ID" value="AAA27354.1"/>
    <property type="molecule type" value="Genomic_DNA"/>
</dbReference>
<dbReference type="EMBL" id="CP000951">
    <property type="protein sequence ID" value="ACA99388.1"/>
    <property type="molecule type" value="Genomic_DNA"/>
</dbReference>
<dbReference type="RefSeq" id="WP_012307011.1">
    <property type="nucleotide sequence ID" value="NZ_JAHHPU010000001.1"/>
</dbReference>
<dbReference type="STRING" id="32049.SYNPCC7002_A1392"/>
<dbReference type="KEGG" id="syp:SYNPCC7002_A1392"/>
<dbReference type="eggNOG" id="ENOG502ZBRT">
    <property type="taxonomic scope" value="Bacteria"/>
</dbReference>
<dbReference type="HOGENOM" id="CLU_1314352_0_0_3"/>
<dbReference type="Proteomes" id="UP000001688">
    <property type="component" value="Chromosome"/>
</dbReference>
<dbReference type="Pfam" id="PF19928">
    <property type="entry name" value="DUF6391"/>
    <property type="match status" value="1"/>
</dbReference>
<organism>
    <name type="scientific">Picosynechococcus sp. (strain ATCC 27264 / PCC 7002 / PR-6)</name>
    <name type="common">Agmenellum quadruplicatum</name>
    <dbReference type="NCBI Taxonomy" id="32049"/>
    <lineage>
        <taxon>Bacteria</taxon>
        <taxon>Bacillati</taxon>
        <taxon>Cyanobacteriota</taxon>
        <taxon>Cyanophyceae</taxon>
        <taxon>Oscillatoriophycideae</taxon>
        <taxon>Chroococcales</taxon>
        <taxon>Geminocystaceae</taxon>
        <taxon>Picosynechococcus</taxon>
    </lineage>
</organism>
<sequence length="205" mass="22703">MTAHNFFWDGDWFSPQASQDQNLIAQLDFVPGLRELLFIRQAHALEHGTVWVLTELAERYPTAWRHHYAELSGMSTGQGFYLFGGVDKTDLYRAVSTAGDRLRSGEWNLAIHPRCGTNISVTLLLTAGLAGGAAWLLPKDPLTQLFGMGTAAATAWAIAPDLGKYAQQHITTAIPLNLALEEIQENTDESGNPSHFVRLRWQDAQ</sequence>
<reference key="1">
    <citation type="journal article" date="1993" name="Mol. Microbiol.">
        <title>Cloning and characterization of the psaE gene of the cyanobacterium Synechococcus sp. PCC 7002: characterization of a psaE mutant and overproduction of the protein in Escherichia coli.</title>
        <authorList>
            <person name="Zhao J."/>
            <person name="Snyder W."/>
            <person name="Muhlenhoff U."/>
            <person name="Rhiel E."/>
            <person name="Bryant D.A."/>
        </authorList>
    </citation>
    <scope>NUCLEOTIDE SEQUENCE [GENOMIC DNA]</scope>
</reference>
<reference key="2">
    <citation type="submission" date="2008-02" db="EMBL/GenBank/DDBJ databases">
        <title>Complete sequence of Synechococcus sp. PCC 7002.</title>
        <authorList>
            <person name="Li T."/>
            <person name="Zhao J."/>
            <person name="Zhao C."/>
            <person name="Liu Z."/>
            <person name="Zhao F."/>
            <person name="Marquardt J."/>
            <person name="Nomura C.T."/>
            <person name="Persson S."/>
            <person name="Detter J.C."/>
            <person name="Richardson P.M."/>
            <person name="Lanz C."/>
            <person name="Schuster S.C."/>
            <person name="Wang J."/>
            <person name="Li S."/>
            <person name="Huang X."/>
            <person name="Cai T."/>
            <person name="Yu Z."/>
            <person name="Luo J."/>
            <person name="Zhao J."/>
            <person name="Bryant D.A."/>
        </authorList>
    </citation>
    <scope>NUCLEOTIDE SEQUENCE [LARGE SCALE GENOMIC DNA]</scope>
    <source>
        <strain>ATCC 27264 / PCC 7002 / PR-6</strain>
    </source>
</reference>
<name>Y1392_PICP2</name>
<feature type="chain" id="PRO_0000066416" description="Uncharacterized protein SYNPCC7002_A1392">
    <location>
        <begin position="1"/>
        <end position="205"/>
    </location>
</feature>
<protein>
    <recommendedName>
        <fullName>Uncharacterized protein SYNPCC7002_A1392</fullName>
    </recommendedName>
</protein>
<proteinExistence type="predicted"/>
<keyword id="KW-1185">Reference proteome</keyword>